<dbReference type="EC" id="1.1.1.40"/>
<dbReference type="EMBL" id="D16499">
    <property type="protein sequence ID" value="BAA03949.1"/>
    <property type="molecule type" value="mRNA"/>
</dbReference>
<dbReference type="EMBL" id="AP002816">
    <property type="protein sequence ID" value="BAB03427.1"/>
    <property type="molecule type" value="Genomic_DNA"/>
</dbReference>
<dbReference type="EMBL" id="AP002836">
    <property type="protein sequence ID" value="BAB07934.1"/>
    <property type="molecule type" value="Genomic_DNA"/>
</dbReference>
<dbReference type="EMBL" id="AP008207">
    <property type="protein sequence ID" value="BAF04171.1"/>
    <property type="molecule type" value="Genomic_DNA"/>
</dbReference>
<dbReference type="EMBL" id="AP014957">
    <property type="protein sequence ID" value="BAS70801.1"/>
    <property type="molecule type" value="Genomic_DNA"/>
</dbReference>
<dbReference type="EMBL" id="CM000138">
    <property type="protein sequence ID" value="EEE54023.1"/>
    <property type="molecule type" value="Genomic_DNA"/>
</dbReference>
<dbReference type="EMBL" id="AK121770">
    <property type="protein sequence ID" value="BAH00649.1"/>
    <property type="molecule type" value="mRNA"/>
</dbReference>
<dbReference type="PIR" id="S46499">
    <property type="entry name" value="S46499"/>
</dbReference>
<dbReference type="RefSeq" id="XP_015621553.1">
    <property type="nucleotide sequence ID" value="XM_015766067.1"/>
</dbReference>
<dbReference type="SMR" id="P43279"/>
<dbReference type="FunCoup" id="P43279">
    <property type="interactions" value="3167"/>
</dbReference>
<dbReference type="STRING" id="39947.P43279"/>
<dbReference type="PaxDb" id="39947-P43279"/>
<dbReference type="EnsemblPlants" id="Os01t0188400-01">
    <property type="protein sequence ID" value="Os01t0188400-01"/>
    <property type="gene ID" value="Os01g0188400"/>
</dbReference>
<dbReference type="Gramene" id="Os01t0188400-01">
    <property type="protein sequence ID" value="Os01t0188400-01"/>
    <property type="gene ID" value="Os01g0188400"/>
</dbReference>
<dbReference type="KEGG" id="dosa:Os01g0188400"/>
<dbReference type="eggNOG" id="KOG1257">
    <property type="taxonomic scope" value="Eukaryota"/>
</dbReference>
<dbReference type="HOGENOM" id="CLU_011405_5_2_1"/>
<dbReference type="InParanoid" id="P43279"/>
<dbReference type="OMA" id="EVPVTPW"/>
<dbReference type="OrthoDB" id="5365701at2759"/>
<dbReference type="SABIO-RK" id="P43279"/>
<dbReference type="UniPathway" id="UPA00322"/>
<dbReference type="Proteomes" id="UP000000763">
    <property type="component" value="Chromosome 1"/>
</dbReference>
<dbReference type="Proteomes" id="UP000007752">
    <property type="component" value="Chromosome 1"/>
</dbReference>
<dbReference type="Proteomes" id="UP000059680">
    <property type="component" value="Chromosome 1"/>
</dbReference>
<dbReference type="ExpressionAtlas" id="P43279">
    <property type="expression patterns" value="baseline and differential"/>
</dbReference>
<dbReference type="GO" id="GO:0009507">
    <property type="term" value="C:chloroplast"/>
    <property type="evidence" value="ECO:0000318"/>
    <property type="project" value="GO_Central"/>
</dbReference>
<dbReference type="GO" id="GO:0004473">
    <property type="term" value="F:malate dehydrogenase (decarboxylating) (NADP+) activity"/>
    <property type="evidence" value="ECO:0000318"/>
    <property type="project" value="GO_Central"/>
</dbReference>
<dbReference type="GO" id="GO:0046872">
    <property type="term" value="F:metal ion binding"/>
    <property type="evidence" value="ECO:0007669"/>
    <property type="project" value="UniProtKB-KW"/>
</dbReference>
<dbReference type="GO" id="GO:0051287">
    <property type="term" value="F:NAD binding"/>
    <property type="evidence" value="ECO:0007669"/>
    <property type="project" value="InterPro"/>
</dbReference>
<dbReference type="GO" id="GO:0008948">
    <property type="term" value="F:oxaloacetate decarboxylase activity"/>
    <property type="evidence" value="ECO:0007669"/>
    <property type="project" value="RHEA"/>
</dbReference>
<dbReference type="GO" id="GO:0006108">
    <property type="term" value="P:malate metabolic process"/>
    <property type="evidence" value="ECO:0000318"/>
    <property type="project" value="GO_Central"/>
</dbReference>
<dbReference type="GO" id="GO:0006090">
    <property type="term" value="P:pyruvate metabolic process"/>
    <property type="evidence" value="ECO:0000318"/>
    <property type="project" value="GO_Central"/>
</dbReference>
<dbReference type="CDD" id="cd05312">
    <property type="entry name" value="NAD_bind_1_malic_enz"/>
    <property type="match status" value="1"/>
</dbReference>
<dbReference type="FunFam" id="3.40.50.10380:FF:000002">
    <property type="entry name" value="Malic enzyme"/>
    <property type="match status" value="1"/>
</dbReference>
<dbReference type="FunFam" id="3.40.50.720:FF:000067">
    <property type="entry name" value="Malic enzyme"/>
    <property type="match status" value="1"/>
</dbReference>
<dbReference type="Gene3D" id="3.40.50.10380">
    <property type="entry name" value="Malic enzyme, N-terminal domain"/>
    <property type="match status" value="1"/>
</dbReference>
<dbReference type="Gene3D" id="3.40.50.720">
    <property type="entry name" value="NAD(P)-binding Rossmann-like Domain"/>
    <property type="match status" value="1"/>
</dbReference>
<dbReference type="InterPro" id="IPR046346">
    <property type="entry name" value="Aminoacid_DH-like_N_sf"/>
</dbReference>
<dbReference type="InterPro" id="IPR015884">
    <property type="entry name" value="Malic_enzyme_CS"/>
</dbReference>
<dbReference type="InterPro" id="IPR012301">
    <property type="entry name" value="Malic_N_dom"/>
</dbReference>
<dbReference type="InterPro" id="IPR037062">
    <property type="entry name" value="Malic_N_dom_sf"/>
</dbReference>
<dbReference type="InterPro" id="IPR012302">
    <property type="entry name" value="Malic_NAD-bd"/>
</dbReference>
<dbReference type="InterPro" id="IPR001891">
    <property type="entry name" value="Malic_OxRdtase"/>
</dbReference>
<dbReference type="InterPro" id="IPR036291">
    <property type="entry name" value="NAD(P)-bd_dom_sf"/>
</dbReference>
<dbReference type="NCBIfam" id="NF010052">
    <property type="entry name" value="PRK13529.1"/>
    <property type="match status" value="1"/>
</dbReference>
<dbReference type="PANTHER" id="PTHR23406">
    <property type="entry name" value="MALIC ENZYME-RELATED"/>
    <property type="match status" value="1"/>
</dbReference>
<dbReference type="PANTHER" id="PTHR23406:SF94">
    <property type="entry name" value="NADP-DEPENDENT MALIC ENZYME, CHLOROPLASTIC"/>
    <property type="match status" value="1"/>
</dbReference>
<dbReference type="Pfam" id="PF00390">
    <property type="entry name" value="malic"/>
    <property type="match status" value="1"/>
</dbReference>
<dbReference type="Pfam" id="PF03949">
    <property type="entry name" value="Malic_M"/>
    <property type="match status" value="1"/>
</dbReference>
<dbReference type="PIRSF" id="PIRSF000106">
    <property type="entry name" value="ME"/>
    <property type="match status" value="1"/>
</dbReference>
<dbReference type="PRINTS" id="PR00072">
    <property type="entry name" value="MALOXRDTASE"/>
</dbReference>
<dbReference type="SMART" id="SM01274">
    <property type="entry name" value="malic"/>
    <property type="match status" value="1"/>
</dbReference>
<dbReference type="SMART" id="SM00919">
    <property type="entry name" value="Malic_M"/>
    <property type="match status" value="1"/>
</dbReference>
<dbReference type="SUPFAM" id="SSF53223">
    <property type="entry name" value="Aminoacid dehydrogenase-like, N-terminal domain"/>
    <property type="match status" value="1"/>
</dbReference>
<dbReference type="SUPFAM" id="SSF51735">
    <property type="entry name" value="NAD(P)-binding Rossmann-fold domains"/>
    <property type="match status" value="1"/>
</dbReference>
<dbReference type="PROSITE" id="PS00331">
    <property type="entry name" value="MALIC_ENZYMES"/>
    <property type="match status" value="1"/>
</dbReference>
<protein>
    <recommendedName>
        <fullName>NADP-dependent malic enzyme, chloroplastic</fullName>
        <shortName>NADP-ME</shortName>
        <ecNumber>1.1.1.40</ecNumber>
    </recommendedName>
</protein>
<name>MAOC_ORYSJ</name>
<accession>P43279</accession>
<accession>Q0JQ07</accession>
<accession>Q9LDH7</accession>
<feature type="transit peptide" description="Chloroplast" evidence="2">
    <location>
        <begin position="1"/>
        <end position="49"/>
    </location>
</feature>
<feature type="chain" id="PRO_0000018548" description="NADP-dependent malic enzyme, chloroplastic">
    <location>
        <begin position="50"/>
        <end position="639"/>
    </location>
</feature>
<feature type="region of interest" description="Disordered" evidence="3">
    <location>
        <begin position="15"/>
        <end position="34"/>
    </location>
</feature>
<feature type="active site" description="Proton donor" evidence="1">
    <location>
        <position position="187"/>
    </location>
</feature>
<feature type="active site" description="Proton acceptor" evidence="1">
    <location>
        <position position="258"/>
    </location>
</feature>
<feature type="binding site" evidence="1">
    <location>
        <position position="240"/>
    </location>
    <ligand>
        <name>NAD(+)</name>
        <dbReference type="ChEBI" id="CHEBI:57540"/>
    </ligand>
</feature>
<feature type="binding site" evidence="1">
    <location>
        <position position="330"/>
    </location>
    <ligand>
        <name>a divalent metal cation</name>
        <dbReference type="ChEBI" id="CHEBI:60240"/>
    </ligand>
</feature>
<feature type="binding site" evidence="1">
    <location>
        <position position="331"/>
    </location>
    <ligand>
        <name>a divalent metal cation</name>
        <dbReference type="ChEBI" id="CHEBI:60240"/>
    </ligand>
</feature>
<feature type="binding site" evidence="1">
    <location>
        <position position="354"/>
    </location>
    <ligand>
        <name>a divalent metal cation</name>
        <dbReference type="ChEBI" id="CHEBI:60240"/>
    </ligand>
</feature>
<feature type="binding site" evidence="1">
    <location>
        <position position="354"/>
    </location>
    <ligand>
        <name>NAD(+)</name>
        <dbReference type="ChEBI" id="CHEBI:57540"/>
    </ligand>
</feature>
<feature type="binding site" evidence="1">
    <location>
        <begin position="383"/>
        <end position="399"/>
    </location>
    <ligand>
        <name>NADP(+)</name>
        <dbReference type="ChEBI" id="CHEBI:58349"/>
    </ligand>
</feature>
<feature type="binding site" evidence="1">
    <location>
        <position position="495"/>
    </location>
    <ligand>
        <name>NAD(+)</name>
        <dbReference type="ChEBI" id="CHEBI:57540"/>
    </ligand>
</feature>
<feature type="site" description="Important for activity" evidence="1">
    <location>
        <position position="354"/>
    </location>
</feature>
<feature type="sequence conflict" description="In Ref. 1; BAA03949." evidence="4" ref="1">
    <location>
        <position position="45"/>
    </location>
</feature>
<feature type="sequence conflict" description="In Ref. 1; BAA03949." evidence="4" ref="1">
    <original>AAA</original>
    <variation>TPV</variation>
    <location>
        <begin position="50"/>
        <end position="52"/>
    </location>
</feature>
<feature type="sequence conflict" description="In Ref. 1; BAA03949." evidence="4" ref="1">
    <original>S</original>
    <variation>A</variation>
    <location>
        <position position="494"/>
    </location>
</feature>
<feature type="sequence conflict" description="In Ref. 1; BAA03949." evidence="4" ref="1">
    <original>S</original>
    <variation>T</variation>
    <location>
        <position position="602"/>
    </location>
</feature>
<proteinExistence type="evidence at transcript level"/>
<organism>
    <name type="scientific">Oryza sativa subsp. japonica</name>
    <name type="common">Rice</name>
    <dbReference type="NCBI Taxonomy" id="39947"/>
    <lineage>
        <taxon>Eukaryota</taxon>
        <taxon>Viridiplantae</taxon>
        <taxon>Streptophyta</taxon>
        <taxon>Embryophyta</taxon>
        <taxon>Tracheophyta</taxon>
        <taxon>Spermatophyta</taxon>
        <taxon>Magnoliopsida</taxon>
        <taxon>Liliopsida</taxon>
        <taxon>Poales</taxon>
        <taxon>Poaceae</taxon>
        <taxon>BOP clade</taxon>
        <taxon>Oryzoideae</taxon>
        <taxon>Oryzeae</taxon>
        <taxon>Oryzinae</taxon>
        <taxon>Oryza</taxon>
        <taxon>Oryza sativa</taxon>
    </lineage>
</organism>
<sequence length="639" mass="69866">MLSARAAATAAAAAASPLWKRGEGGSSGSGSGCTSCREVRRRAAAVRVRAAAPRRVEAVAMESAAETEKKEEVAAAGGGVEDMATEEVPVTPWAFSVASGYTLLRDPHHNKGLAFSEKERDAHYLRGLLPPAVVSQDLQVKKIMHNLRQYSVPLQRYMAMMDLQERNERLFYKLLIDNVEELLPVVYTPTVGEACQKYGSIFRQPQGLYVSLKDKGKVLDVLRNWPERNIQVIVVTDGERILGLGDLGCQGMGIPVGKLSLYTALGGVRPSACLPITIDVGTNNEQLLNDEFYIGLRQRRATGKEYHELMEEFMSAVKQIYGEKVLIQFEDFANHNAFDLLAKYSKSHLVFNDDIQGTASVVLAGLLSSLKVVGGTLAEHTYLFLGAGEAGTGIAELIALEISKQTKAPIEECRKKVWLLDSKGLIVNSRKESLQAFKKPWAHEHEPVTTLLDAVQSIKPTVLIGTSGVGKTFTKEVIEAMASFNERPVIFSLSNPTSHSECTAEEAYNWSQGRAVFASGSPFDPVEYNGKIHVPGQSNNAYIFPGFGLGVVISGAVRVHEDMLLAASETLADQATQENFEKGSIFPPFTNIRKISARIAASVAAKAYELGLATRLPQPRDLEKYAESCMYTPVYRSYR</sequence>
<comment type="function">
    <text>The chloroplastic ME isoform decarboxylates malate shuttled from neighboring mesophyll cells. The CO(2) released is then refixed by ribulose-bisphosphate carboxylase. This pathway eliminates the photorespiratory loss of CO(2) that occurs in most plants.</text>
</comment>
<comment type="catalytic activity">
    <reaction>
        <text>(S)-malate + NADP(+) = pyruvate + CO2 + NADPH</text>
        <dbReference type="Rhea" id="RHEA:18253"/>
        <dbReference type="ChEBI" id="CHEBI:15361"/>
        <dbReference type="ChEBI" id="CHEBI:15589"/>
        <dbReference type="ChEBI" id="CHEBI:16526"/>
        <dbReference type="ChEBI" id="CHEBI:57783"/>
        <dbReference type="ChEBI" id="CHEBI:58349"/>
        <dbReference type="EC" id="1.1.1.40"/>
    </reaction>
</comment>
<comment type="catalytic activity">
    <reaction>
        <text>oxaloacetate + H(+) = pyruvate + CO2</text>
        <dbReference type="Rhea" id="RHEA:15641"/>
        <dbReference type="ChEBI" id="CHEBI:15361"/>
        <dbReference type="ChEBI" id="CHEBI:15378"/>
        <dbReference type="ChEBI" id="CHEBI:16452"/>
        <dbReference type="ChEBI" id="CHEBI:16526"/>
        <dbReference type="EC" id="1.1.1.40"/>
    </reaction>
</comment>
<comment type="cofactor">
    <cofactor evidence="1">
        <name>Mg(2+)</name>
        <dbReference type="ChEBI" id="CHEBI:18420"/>
    </cofactor>
    <cofactor evidence="1">
        <name>Mn(2+)</name>
        <dbReference type="ChEBI" id="CHEBI:29035"/>
    </cofactor>
    <text evidence="1">Divalent metal cations. Prefers magnesium or manganese.</text>
</comment>
<comment type="pathway">
    <text>Photosynthesis; C4 acid pathway.</text>
</comment>
<comment type="subunit">
    <text evidence="1">Homotetramer.</text>
</comment>
<comment type="subcellular location">
    <subcellularLocation>
        <location>Plastid</location>
        <location>Chloroplast</location>
    </subcellularLocation>
</comment>
<comment type="similarity">
    <text evidence="4">Belongs to the malic enzymes family.</text>
</comment>
<evidence type="ECO:0000250" key="1"/>
<evidence type="ECO:0000255" key="2"/>
<evidence type="ECO:0000256" key="3">
    <source>
        <dbReference type="SAM" id="MobiDB-lite"/>
    </source>
</evidence>
<evidence type="ECO:0000305" key="4"/>
<evidence type="ECO:0000312" key="5">
    <source>
        <dbReference type="EMBL" id="EEE54023.1"/>
    </source>
</evidence>
<keyword id="KW-0150">Chloroplast</keyword>
<keyword id="KW-0479">Metal-binding</keyword>
<keyword id="KW-0520">NAD</keyword>
<keyword id="KW-0521">NADP</keyword>
<keyword id="KW-0560">Oxidoreductase</keyword>
<keyword id="KW-0934">Plastid</keyword>
<keyword id="KW-1185">Reference proteome</keyword>
<keyword id="KW-0809">Transit peptide</keyword>
<gene>
    <name type="primary">ME6</name>
    <name type="ordered locus">Os01g0188400</name>
    <name type="ordered locus">LOC_Os01g09320</name>
    <name evidence="5" type="ORF">OsJ_00690</name>
    <name type="ORF">P0512G09.20</name>
    <name type="ORF">P0695A04.29</name>
</gene>
<reference key="1">
    <citation type="journal article" date="1994" name="Plant Mol. Biol.">
        <title>Nucleotide sequence of a rice cDNA similar to a maize NADP-dependent malic enzyme.</title>
        <authorList>
            <person name="Fushimi T."/>
            <person name="Umeda M."/>
            <person name="Shimazaki T."/>
            <person name="Kato A."/>
            <person name="Toriyama K."/>
            <person name="Uchimiya H."/>
        </authorList>
    </citation>
    <scope>NUCLEOTIDE SEQUENCE [MRNA]</scope>
    <source>
        <tissue>Callus</tissue>
    </source>
</reference>
<reference key="2">
    <citation type="journal article" date="2002" name="Nature">
        <title>The genome sequence and structure of rice chromosome 1.</title>
        <authorList>
            <person name="Sasaki T."/>
            <person name="Matsumoto T."/>
            <person name="Yamamoto K."/>
            <person name="Sakata K."/>
            <person name="Baba T."/>
            <person name="Katayose Y."/>
            <person name="Wu J."/>
            <person name="Niimura Y."/>
            <person name="Cheng Z."/>
            <person name="Nagamura Y."/>
            <person name="Antonio B.A."/>
            <person name="Kanamori H."/>
            <person name="Hosokawa S."/>
            <person name="Masukawa M."/>
            <person name="Arikawa K."/>
            <person name="Chiden Y."/>
            <person name="Hayashi M."/>
            <person name="Okamoto M."/>
            <person name="Ando T."/>
            <person name="Aoki H."/>
            <person name="Arita K."/>
            <person name="Hamada M."/>
            <person name="Harada C."/>
            <person name="Hijishita S."/>
            <person name="Honda M."/>
            <person name="Ichikawa Y."/>
            <person name="Idonuma A."/>
            <person name="Iijima M."/>
            <person name="Ikeda M."/>
            <person name="Ikeno M."/>
            <person name="Ito S."/>
            <person name="Ito T."/>
            <person name="Ito Y."/>
            <person name="Ito Y."/>
            <person name="Iwabuchi A."/>
            <person name="Kamiya K."/>
            <person name="Karasawa W."/>
            <person name="Katagiri S."/>
            <person name="Kikuta A."/>
            <person name="Kobayashi N."/>
            <person name="Kono I."/>
            <person name="Machita K."/>
            <person name="Maehara T."/>
            <person name="Mizuno H."/>
            <person name="Mizubayashi T."/>
            <person name="Mukai Y."/>
            <person name="Nagasaki H."/>
            <person name="Nakashima M."/>
            <person name="Nakama Y."/>
            <person name="Nakamichi Y."/>
            <person name="Nakamura M."/>
            <person name="Namiki N."/>
            <person name="Negishi M."/>
            <person name="Ohta I."/>
            <person name="Ono N."/>
            <person name="Saji S."/>
            <person name="Sakai K."/>
            <person name="Shibata M."/>
            <person name="Shimokawa T."/>
            <person name="Shomura A."/>
            <person name="Song J."/>
            <person name="Takazaki Y."/>
            <person name="Terasawa K."/>
            <person name="Tsuji K."/>
            <person name="Waki K."/>
            <person name="Yamagata H."/>
            <person name="Yamane H."/>
            <person name="Yoshiki S."/>
            <person name="Yoshihara R."/>
            <person name="Yukawa K."/>
            <person name="Zhong H."/>
            <person name="Iwama H."/>
            <person name="Endo T."/>
            <person name="Ito H."/>
            <person name="Hahn J.H."/>
            <person name="Kim H.-I."/>
            <person name="Eun M.-Y."/>
            <person name="Yano M."/>
            <person name="Jiang J."/>
            <person name="Gojobori T."/>
        </authorList>
    </citation>
    <scope>NUCLEOTIDE SEQUENCE [LARGE SCALE GENOMIC DNA]</scope>
    <source>
        <strain>cv. Nipponbare</strain>
    </source>
</reference>
<reference key="3">
    <citation type="journal article" date="2005" name="Nature">
        <title>The map-based sequence of the rice genome.</title>
        <authorList>
            <consortium name="International rice genome sequencing project (IRGSP)"/>
        </authorList>
    </citation>
    <scope>NUCLEOTIDE SEQUENCE [LARGE SCALE GENOMIC DNA]</scope>
    <source>
        <strain>cv. Nipponbare</strain>
    </source>
</reference>
<reference key="4">
    <citation type="journal article" date="2008" name="Nucleic Acids Res.">
        <title>The rice annotation project database (RAP-DB): 2008 update.</title>
        <authorList>
            <consortium name="The rice annotation project (RAP)"/>
        </authorList>
    </citation>
    <scope>GENOME REANNOTATION</scope>
    <source>
        <strain>cv. Nipponbare</strain>
    </source>
</reference>
<reference key="5">
    <citation type="journal article" date="2013" name="Rice">
        <title>Improvement of the Oryza sativa Nipponbare reference genome using next generation sequence and optical map data.</title>
        <authorList>
            <person name="Kawahara Y."/>
            <person name="de la Bastide M."/>
            <person name="Hamilton J.P."/>
            <person name="Kanamori H."/>
            <person name="McCombie W.R."/>
            <person name="Ouyang S."/>
            <person name="Schwartz D.C."/>
            <person name="Tanaka T."/>
            <person name="Wu J."/>
            <person name="Zhou S."/>
            <person name="Childs K.L."/>
            <person name="Davidson R.M."/>
            <person name="Lin H."/>
            <person name="Quesada-Ocampo L."/>
            <person name="Vaillancourt B."/>
            <person name="Sakai H."/>
            <person name="Lee S.S."/>
            <person name="Kim J."/>
            <person name="Numa H."/>
            <person name="Itoh T."/>
            <person name="Buell C.R."/>
            <person name="Matsumoto T."/>
        </authorList>
    </citation>
    <scope>GENOME REANNOTATION</scope>
    <source>
        <strain>cv. Nipponbare</strain>
    </source>
</reference>
<reference key="6">
    <citation type="journal article" date="2005" name="PLoS Biol.">
        <title>The genomes of Oryza sativa: a history of duplications.</title>
        <authorList>
            <person name="Yu J."/>
            <person name="Wang J."/>
            <person name="Lin W."/>
            <person name="Li S."/>
            <person name="Li H."/>
            <person name="Zhou J."/>
            <person name="Ni P."/>
            <person name="Dong W."/>
            <person name="Hu S."/>
            <person name="Zeng C."/>
            <person name="Zhang J."/>
            <person name="Zhang Y."/>
            <person name="Li R."/>
            <person name="Xu Z."/>
            <person name="Li S."/>
            <person name="Li X."/>
            <person name="Zheng H."/>
            <person name="Cong L."/>
            <person name="Lin L."/>
            <person name="Yin J."/>
            <person name="Geng J."/>
            <person name="Li G."/>
            <person name="Shi J."/>
            <person name="Liu J."/>
            <person name="Lv H."/>
            <person name="Li J."/>
            <person name="Wang J."/>
            <person name="Deng Y."/>
            <person name="Ran L."/>
            <person name="Shi X."/>
            <person name="Wang X."/>
            <person name="Wu Q."/>
            <person name="Li C."/>
            <person name="Ren X."/>
            <person name="Wang J."/>
            <person name="Wang X."/>
            <person name="Li D."/>
            <person name="Liu D."/>
            <person name="Zhang X."/>
            <person name="Ji Z."/>
            <person name="Zhao W."/>
            <person name="Sun Y."/>
            <person name="Zhang Z."/>
            <person name="Bao J."/>
            <person name="Han Y."/>
            <person name="Dong L."/>
            <person name="Ji J."/>
            <person name="Chen P."/>
            <person name="Wu S."/>
            <person name="Liu J."/>
            <person name="Xiao Y."/>
            <person name="Bu D."/>
            <person name="Tan J."/>
            <person name="Yang L."/>
            <person name="Ye C."/>
            <person name="Zhang J."/>
            <person name="Xu J."/>
            <person name="Zhou Y."/>
            <person name="Yu Y."/>
            <person name="Zhang B."/>
            <person name="Zhuang S."/>
            <person name="Wei H."/>
            <person name="Liu B."/>
            <person name="Lei M."/>
            <person name="Yu H."/>
            <person name="Li Y."/>
            <person name="Xu H."/>
            <person name="Wei S."/>
            <person name="He X."/>
            <person name="Fang L."/>
            <person name="Zhang Z."/>
            <person name="Zhang Y."/>
            <person name="Huang X."/>
            <person name="Su Z."/>
            <person name="Tong W."/>
            <person name="Li J."/>
            <person name="Tong Z."/>
            <person name="Li S."/>
            <person name="Ye J."/>
            <person name="Wang L."/>
            <person name="Fang L."/>
            <person name="Lei T."/>
            <person name="Chen C.-S."/>
            <person name="Chen H.-C."/>
            <person name="Xu Z."/>
            <person name="Li H."/>
            <person name="Huang H."/>
            <person name="Zhang F."/>
            <person name="Xu H."/>
            <person name="Li N."/>
            <person name="Zhao C."/>
            <person name="Li S."/>
            <person name="Dong L."/>
            <person name="Huang Y."/>
            <person name="Li L."/>
            <person name="Xi Y."/>
            <person name="Qi Q."/>
            <person name="Li W."/>
            <person name="Zhang B."/>
            <person name="Hu W."/>
            <person name="Zhang Y."/>
            <person name="Tian X."/>
            <person name="Jiao Y."/>
            <person name="Liang X."/>
            <person name="Jin J."/>
            <person name="Gao L."/>
            <person name="Zheng W."/>
            <person name="Hao B."/>
            <person name="Liu S.-M."/>
            <person name="Wang W."/>
            <person name="Yuan L."/>
            <person name="Cao M."/>
            <person name="McDermott J."/>
            <person name="Samudrala R."/>
            <person name="Wang J."/>
            <person name="Wong G.K.-S."/>
            <person name="Yang H."/>
        </authorList>
    </citation>
    <scope>NUCLEOTIDE SEQUENCE [LARGE SCALE GENOMIC DNA]</scope>
    <source>
        <strain>cv. Nipponbare</strain>
    </source>
</reference>
<reference key="7">
    <citation type="journal article" date="2003" name="Science">
        <title>Collection, mapping, and annotation of over 28,000 cDNA clones from japonica rice.</title>
        <authorList>
            <consortium name="The rice full-length cDNA consortium"/>
        </authorList>
    </citation>
    <scope>NUCLEOTIDE SEQUENCE [LARGE SCALE MRNA]</scope>
    <source>
        <strain>cv. Nipponbare</strain>
    </source>
</reference>